<feature type="peptide" id="PRO_0000043756" description="Caeridin-1.1/1.2/1.3">
    <location>
        <begin position="1"/>
        <end position="12"/>
    </location>
</feature>
<feature type="modified residue" description="Leucine amide" evidence="1">
    <location>
        <position position="12"/>
    </location>
</feature>
<protein>
    <recommendedName>
        <fullName>Caeridin-1.1/1.2/1.3</fullName>
    </recommendedName>
</protein>
<keyword id="KW-0027">Amidation</keyword>
<keyword id="KW-0878">Amphibian defense peptide</keyword>
<keyword id="KW-0903">Direct protein sequencing</keyword>
<keyword id="KW-0964">Secreted</keyword>
<dbReference type="GO" id="GO:0005576">
    <property type="term" value="C:extracellular region"/>
    <property type="evidence" value="ECO:0007669"/>
    <property type="project" value="UniProtKB-SubCell"/>
</dbReference>
<dbReference type="GO" id="GO:0006952">
    <property type="term" value="P:defense response"/>
    <property type="evidence" value="ECO:0007669"/>
    <property type="project" value="UniProtKB-KW"/>
</dbReference>
<name>CDN11_RANGI</name>
<sequence>GLLDGLLGTLGL</sequence>
<comment type="function">
    <text>Caeridins show neither neuropeptide activity nor antibiotic activity.</text>
</comment>
<comment type="subcellular location">
    <subcellularLocation>
        <location>Secreted</location>
    </subcellularLocation>
</comment>
<comment type="tissue specificity">
    <text>Expressed by the skin parotoid and/or rostral glands.</text>
</comment>
<comment type="PTM">
    <text>Isomerization alpha-beta of the Asp-4 residue in caeridin 1.2; a cyclic succinimide may be formed between Asp-4 and Gly-5 residues in caeridin 1.3.</text>
</comment>
<comment type="mass spectrometry"/>
<accession>P62566</accession>
<accession>P56245</accession>
<accession>P81253</accession>
<evidence type="ECO:0000269" key="1">
    <source ref="1"/>
</evidence>
<organism>
    <name type="scientific">Ranoidea gilleni</name>
    <name type="common">Centralian tree frog</name>
    <name type="synonym">Litoria gilleni</name>
    <dbReference type="NCBI Taxonomy" id="39405"/>
    <lineage>
        <taxon>Eukaryota</taxon>
        <taxon>Metazoa</taxon>
        <taxon>Chordata</taxon>
        <taxon>Craniata</taxon>
        <taxon>Vertebrata</taxon>
        <taxon>Euteleostomi</taxon>
        <taxon>Amphibia</taxon>
        <taxon>Batrachia</taxon>
        <taxon>Anura</taxon>
        <taxon>Neobatrachia</taxon>
        <taxon>Hyloidea</taxon>
        <taxon>Hylidae</taxon>
        <taxon>Pelodryadinae</taxon>
        <taxon>Ranoidea</taxon>
    </lineage>
</organism>
<proteinExistence type="evidence at protein level"/>
<reference key="1">
    <citation type="journal article" date="1993" name="J. Chem. Res.">
        <title>Peptides from Australian frogs. The structures of the caerins and caeridins from Litoria gilleni.</title>
        <authorList>
            <person name="Waugh R.J."/>
            <person name="Stone D.J.M."/>
            <person name="Bowie J.H."/>
            <person name="Wallace J.C."/>
            <person name="Tyler M.J."/>
        </authorList>
    </citation>
    <scope>PROTEIN SEQUENCE</scope>
    <scope>AMIDATION AT LEU-12</scope>
    <scope>MASS SPECTROMETRY</scope>
    <source>
        <tissue>Parotoid gland</tissue>
    </source>
</reference>
<reference key="2">
    <citation type="journal article" date="1995" name="Aust. J. Chem.">
        <title>Two isomeric alpha and beta aspartyl dodecapeptides and their cyclic amino succinyl analogue from the Australian tree frog Litoria gilleni.</title>
        <authorList>
            <person name="Waugh R.J."/>
            <person name="Steinborner S.T."/>
            <person name="Bowie J.H."/>
            <person name="Wallace J.C."/>
            <person name="Tyler M.J."/>
            <person name="Hu P."/>
            <person name="Gross M.L."/>
        </authorList>
    </citation>
    <scope>PROTEIN SEQUENCE</scope>
    <scope>IDENTIFICATION BY MASS SPECTROMETRY</scope>
</reference>